<feature type="chain" id="PRO_0000267501" description="Type III pantothenate kinase">
    <location>
        <begin position="1"/>
        <end position="258"/>
    </location>
</feature>
<feature type="active site" description="Proton acceptor" evidence="1">
    <location>
        <position position="111"/>
    </location>
</feature>
<feature type="binding site" evidence="1">
    <location>
        <begin position="12"/>
        <end position="19"/>
    </location>
    <ligand>
        <name>ATP</name>
        <dbReference type="ChEBI" id="CHEBI:30616"/>
    </ligand>
</feature>
<feature type="binding site" evidence="1">
    <location>
        <position position="94"/>
    </location>
    <ligand>
        <name>substrate</name>
    </ligand>
</feature>
<feature type="binding site" evidence="1">
    <location>
        <begin position="109"/>
        <end position="112"/>
    </location>
    <ligand>
        <name>substrate</name>
    </ligand>
</feature>
<feature type="binding site" evidence="1">
    <location>
        <position position="132"/>
    </location>
    <ligand>
        <name>K(+)</name>
        <dbReference type="ChEBI" id="CHEBI:29103"/>
    </ligand>
</feature>
<feature type="binding site" evidence="1">
    <location>
        <position position="135"/>
    </location>
    <ligand>
        <name>ATP</name>
        <dbReference type="ChEBI" id="CHEBI:30616"/>
    </ligand>
</feature>
<feature type="binding site" evidence="1">
    <location>
        <position position="187"/>
    </location>
    <ligand>
        <name>substrate</name>
    </ligand>
</feature>
<name>COAX_BORAP</name>
<sequence>MNKPLLSELIIDIGNTSIAFASFKDNKINLFVKMKTNLMLRHDEVFSFFKENFDFNVNQVFISSVVPILNGIFENVIFSFFKIKPLFISFDLNYDLTFNPYKSGKFLLGSDVFANLVAAIENYSFENVLVVDLGTACTIFAVSRQDGILGGLINSGPLINFNSLLDNAYLLKKFSISTPSNLLERTTSGSVNSGLFYQYKYLIEGVYRDIKKMYKKEFNLIIAGGNANLLLPLIEIEFIFNIHLTVEGIRILGNSIVF</sequence>
<evidence type="ECO:0000255" key="1">
    <source>
        <dbReference type="HAMAP-Rule" id="MF_01274"/>
    </source>
</evidence>
<proteinExistence type="inferred from homology"/>
<gene>
    <name evidence="1" type="primary">coaX</name>
    <name type="ordered locus">BAPKO_0553</name>
    <name type="ordered locus">BafPKo_0540</name>
</gene>
<comment type="function">
    <text evidence="1">Catalyzes the phosphorylation of pantothenate (Pan), the first step in CoA biosynthesis.</text>
</comment>
<comment type="catalytic activity">
    <reaction evidence="1">
        <text>(R)-pantothenate + ATP = (R)-4'-phosphopantothenate + ADP + H(+)</text>
        <dbReference type="Rhea" id="RHEA:16373"/>
        <dbReference type="ChEBI" id="CHEBI:10986"/>
        <dbReference type="ChEBI" id="CHEBI:15378"/>
        <dbReference type="ChEBI" id="CHEBI:29032"/>
        <dbReference type="ChEBI" id="CHEBI:30616"/>
        <dbReference type="ChEBI" id="CHEBI:456216"/>
        <dbReference type="EC" id="2.7.1.33"/>
    </reaction>
</comment>
<comment type="cofactor">
    <cofactor evidence="1">
        <name>NH4(+)</name>
        <dbReference type="ChEBI" id="CHEBI:28938"/>
    </cofactor>
    <cofactor evidence="1">
        <name>K(+)</name>
        <dbReference type="ChEBI" id="CHEBI:29103"/>
    </cofactor>
    <text evidence="1">A monovalent cation. Ammonium or potassium.</text>
</comment>
<comment type="pathway">
    <text evidence="1">Cofactor biosynthesis; coenzyme A biosynthesis; CoA from (R)-pantothenate: step 1/5.</text>
</comment>
<comment type="subunit">
    <text evidence="1">Homodimer.</text>
</comment>
<comment type="subcellular location">
    <subcellularLocation>
        <location evidence="1">Cytoplasm</location>
    </subcellularLocation>
</comment>
<comment type="similarity">
    <text evidence="1">Belongs to the type III pantothenate kinase family.</text>
</comment>
<protein>
    <recommendedName>
        <fullName evidence="1">Type III pantothenate kinase</fullName>
        <ecNumber evidence="1">2.7.1.33</ecNumber>
    </recommendedName>
    <alternativeName>
        <fullName evidence="1">PanK-III</fullName>
    </alternativeName>
    <alternativeName>
        <fullName evidence="1">Pantothenic acid kinase</fullName>
    </alternativeName>
</protein>
<organism>
    <name type="scientific">Borreliella afzelii (strain PKo)</name>
    <name type="common">Borrelia afzelii</name>
    <dbReference type="NCBI Taxonomy" id="390236"/>
    <lineage>
        <taxon>Bacteria</taxon>
        <taxon>Pseudomonadati</taxon>
        <taxon>Spirochaetota</taxon>
        <taxon>Spirochaetia</taxon>
        <taxon>Spirochaetales</taxon>
        <taxon>Borreliaceae</taxon>
        <taxon>Borreliella</taxon>
    </lineage>
</organism>
<reference key="1">
    <citation type="journal article" date="2006" name="BMC Genomics">
        <title>Comparative genome analysis: selection pressure on the Borrelia vls cassettes is essential for infectivity.</title>
        <authorList>
            <person name="Gloeckner G."/>
            <person name="Schulte-Spechtel U."/>
            <person name="Schilhabel M."/>
            <person name="Felder M."/>
            <person name="Suehnel J."/>
            <person name="Wilske B."/>
            <person name="Platzer M."/>
        </authorList>
    </citation>
    <scope>NUCLEOTIDE SEQUENCE [LARGE SCALE GENOMIC DNA]</scope>
    <source>
        <strain>PKo</strain>
    </source>
</reference>
<reference key="2">
    <citation type="journal article" date="2011" name="J. Bacteriol.">
        <title>Whole-genome sequences of two Borrelia afzelii and two Borrelia garinii Lyme disease agent isolates.</title>
        <authorList>
            <person name="Casjens S.R."/>
            <person name="Mongodin E.F."/>
            <person name="Qiu W.G."/>
            <person name="Dunn J.J."/>
            <person name="Luft B.J."/>
            <person name="Fraser-Liggett C.M."/>
            <person name="Schutzer S.E."/>
        </authorList>
    </citation>
    <scope>NUCLEOTIDE SEQUENCE [LARGE SCALE GENOMIC DNA]</scope>
    <source>
        <strain>PKo</strain>
    </source>
</reference>
<dbReference type="EC" id="2.7.1.33" evidence="1"/>
<dbReference type="EMBL" id="CP000395">
    <property type="protein sequence ID" value="ABH01796.1"/>
    <property type="molecule type" value="Genomic_DNA"/>
</dbReference>
<dbReference type="EMBL" id="CP002933">
    <property type="protein sequence ID" value="AEL69748.1"/>
    <property type="molecule type" value="Genomic_DNA"/>
</dbReference>
<dbReference type="RefSeq" id="WP_011601071.1">
    <property type="nucleotide sequence ID" value="NZ_CP160066.1"/>
</dbReference>
<dbReference type="SMR" id="Q0SMY2"/>
<dbReference type="STRING" id="29518.BLA32_01640"/>
<dbReference type="KEGG" id="baf:BAPKO_0553"/>
<dbReference type="KEGG" id="bafz:BafPKo_0540"/>
<dbReference type="PATRIC" id="fig|390236.22.peg.521"/>
<dbReference type="eggNOG" id="COG1521">
    <property type="taxonomic scope" value="Bacteria"/>
</dbReference>
<dbReference type="HOGENOM" id="CLU_066627_1_1_12"/>
<dbReference type="OrthoDB" id="350393at2"/>
<dbReference type="UniPathway" id="UPA00241">
    <property type="reaction ID" value="UER00352"/>
</dbReference>
<dbReference type="Proteomes" id="UP000005216">
    <property type="component" value="Chromosome"/>
</dbReference>
<dbReference type="GO" id="GO:0005737">
    <property type="term" value="C:cytoplasm"/>
    <property type="evidence" value="ECO:0007669"/>
    <property type="project" value="UniProtKB-SubCell"/>
</dbReference>
<dbReference type="GO" id="GO:0005524">
    <property type="term" value="F:ATP binding"/>
    <property type="evidence" value="ECO:0007669"/>
    <property type="project" value="UniProtKB-UniRule"/>
</dbReference>
<dbReference type="GO" id="GO:0046872">
    <property type="term" value="F:metal ion binding"/>
    <property type="evidence" value="ECO:0007669"/>
    <property type="project" value="UniProtKB-KW"/>
</dbReference>
<dbReference type="GO" id="GO:0004594">
    <property type="term" value="F:pantothenate kinase activity"/>
    <property type="evidence" value="ECO:0007669"/>
    <property type="project" value="UniProtKB-UniRule"/>
</dbReference>
<dbReference type="GO" id="GO:0015937">
    <property type="term" value="P:coenzyme A biosynthetic process"/>
    <property type="evidence" value="ECO:0007669"/>
    <property type="project" value="UniProtKB-UniRule"/>
</dbReference>
<dbReference type="CDD" id="cd24015">
    <property type="entry name" value="ASKHA_NBD_PanK-III"/>
    <property type="match status" value="1"/>
</dbReference>
<dbReference type="Gene3D" id="3.30.420.40">
    <property type="match status" value="2"/>
</dbReference>
<dbReference type="HAMAP" id="MF_01274">
    <property type="entry name" value="Pantothen_kinase_3"/>
    <property type="match status" value="1"/>
</dbReference>
<dbReference type="InterPro" id="IPR043129">
    <property type="entry name" value="ATPase_NBD"/>
</dbReference>
<dbReference type="InterPro" id="IPR004619">
    <property type="entry name" value="Type_III_PanK"/>
</dbReference>
<dbReference type="NCBIfam" id="TIGR00671">
    <property type="entry name" value="baf"/>
    <property type="match status" value="1"/>
</dbReference>
<dbReference type="NCBIfam" id="NF009863">
    <property type="entry name" value="PRK13326.1"/>
    <property type="match status" value="1"/>
</dbReference>
<dbReference type="PANTHER" id="PTHR34265">
    <property type="entry name" value="TYPE III PANTOTHENATE KINASE"/>
    <property type="match status" value="1"/>
</dbReference>
<dbReference type="PANTHER" id="PTHR34265:SF1">
    <property type="entry name" value="TYPE III PANTOTHENATE KINASE"/>
    <property type="match status" value="1"/>
</dbReference>
<dbReference type="Pfam" id="PF03309">
    <property type="entry name" value="Pan_kinase"/>
    <property type="match status" value="1"/>
</dbReference>
<dbReference type="SUPFAM" id="SSF53067">
    <property type="entry name" value="Actin-like ATPase domain"/>
    <property type="match status" value="2"/>
</dbReference>
<accession>Q0SMY2</accession>
<accession>G0IQ78</accession>
<keyword id="KW-0067">ATP-binding</keyword>
<keyword id="KW-0173">Coenzyme A biosynthesis</keyword>
<keyword id="KW-0963">Cytoplasm</keyword>
<keyword id="KW-0418">Kinase</keyword>
<keyword id="KW-0479">Metal-binding</keyword>
<keyword id="KW-0547">Nucleotide-binding</keyword>
<keyword id="KW-0630">Potassium</keyword>
<keyword id="KW-0808">Transferase</keyword>